<reference key="1">
    <citation type="submission" date="1997-10" db="EMBL/GenBank/DDBJ databases">
        <authorList>
            <person name="Qin N."/>
            <person name="Lin T."/>
            <person name="Birnbaumer L."/>
        </authorList>
    </citation>
    <scope>NUCLEOTIDE SEQUENCE [MRNA]</scope>
    <source>
        <tissue>Brain</tissue>
    </source>
</reference>
<reference key="2">
    <citation type="journal article" date="2005" name="Science">
        <title>The transcriptional landscape of the mammalian genome.</title>
        <authorList>
            <person name="Carninci P."/>
            <person name="Kasukawa T."/>
            <person name="Katayama S."/>
            <person name="Gough J."/>
            <person name="Frith M.C."/>
            <person name="Maeda N."/>
            <person name="Oyama R."/>
            <person name="Ravasi T."/>
            <person name="Lenhard B."/>
            <person name="Wells C."/>
            <person name="Kodzius R."/>
            <person name="Shimokawa K."/>
            <person name="Bajic V.B."/>
            <person name="Brenner S.E."/>
            <person name="Batalov S."/>
            <person name="Forrest A.R."/>
            <person name="Zavolan M."/>
            <person name="Davis M.J."/>
            <person name="Wilming L.G."/>
            <person name="Aidinis V."/>
            <person name="Allen J.E."/>
            <person name="Ambesi-Impiombato A."/>
            <person name="Apweiler R."/>
            <person name="Aturaliya R.N."/>
            <person name="Bailey T.L."/>
            <person name="Bansal M."/>
            <person name="Baxter L."/>
            <person name="Beisel K.W."/>
            <person name="Bersano T."/>
            <person name="Bono H."/>
            <person name="Chalk A.M."/>
            <person name="Chiu K.P."/>
            <person name="Choudhary V."/>
            <person name="Christoffels A."/>
            <person name="Clutterbuck D.R."/>
            <person name="Crowe M.L."/>
            <person name="Dalla E."/>
            <person name="Dalrymple B.P."/>
            <person name="de Bono B."/>
            <person name="Della Gatta G."/>
            <person name="di Bernardo D."/>
            <person name="Down T."/>
            <person name="Engstrom P."/>
            <person name="Fagiolini M."/>
            <person name="Faulkner G."/>
            <person name="Fletcher C.F."/>
            <person name="Fukushima T."/>
            <person name="Furuno M."/>
            <person name="Futaki S."/>
            <person name="Gariboldi M."/>
            <person name="Georgii-Hemming P."/>
            <person name="Gingeras T.R."/>
            <person name="Gojobori T."/>
            <person name="Green R.E."/>
            <person name="Gustincich S."/>
            <person name="Harbers M."/>
            <person name="Hayashi Y."/>
            <person name="Hensch T.K."/>
            <person name="Hirokawa N."/>
            <person name="Hill D."/>
            <person name="Huminiecki L."/>
            <person name="Iacono M."/>
            <person name="Ikeo K."/>
            <person name="Iwama A."/>
            <person name="Ishikawa T."/>
            <person name="Jakt M."/>
            <person name="Kanapin A."/>
            <person name="Katoh M."/>
            <person name="Kawasawa Y."/>
            <person name="Kelso J."/>
            <person name="Kitamura H."/>
            <person name="Kitano H."/>
            <person name="Kollias G."/>
            <person name="Krishnan S.P."/>
            <person name="Kruger A."/>
            <person name="Kummerfeld S.K."/>
            <person name="Kurochkin I.V."/>
            <person name="Lareau L.F."/>
            <person name="Lazarevic D."/>
            <person name="Lipovich L."/>
            <person name="Liu J."/>
            <person name="Liuni S."/>
            <person name="McWilliam S."/>
            <person name="Madan Babu M."/>
            <person name="Madera M."/>
            <person name="Marchionni L."/>
            <person name="Matsuda H."/>
            <person name="Matsuzawa S."/>
            <person name="Miki H."/>
            <person name="Mignone F."/>
            <person name="Miyake S."/>
            <person name="Morris K."/>
            <person name="Mottagui-Tabar S."/>
            <person name="Mulder N."/>
            <person name="Nakano N."/>
            <person name="Nakauchi H."/>
            <person name="Ng P."/>
            <person name="Nilsson R."/>
            <person name="Nishiguchi S."/>
            <person name="Nishikawa S."/>
            <person name="Nori F."/>
            <person name="Ohara O."/>
            <person name="Okazaki Y."/>
            <person name="Orlando V."/>
            <person name="Pang K.C."/>
            <person name="Pavan W.J."/>
            <person name="Pavesi G."/>
            <person name="Pesole G."/>
            <person name="Petrovsky N."/>
            <person name="Piazza S."/>
            <person name="Reed J."/>
            <person name="Reid J.F."/>
            <person name="Ring B.Z."/>
            <person name="Ringwald M."/>
            <person name="Rost B."/>
            <person name="Ruan Y."/>
            <person name="Salzberg S.L."/>
            <person name="Sandelin A."/>
            <person name="Schneider C."/>
            <person name="Schoenbach C."/>
            <person name="Sekiguchi K."/>
            <person name="Semple C.A."/>
            <person name="Seno S."/>
            <person name="Sessa L."/>
            <person name="Sheng Y."/>
            <person name="Shibata Y."/>
            <person name="Shimada H."/>
            <person name="Shimada K."/>
            <person name="Silva D."/>
            <person name="Sinclair B."/>
            <person name="Sperling S."/>
            <person name="Stupka E."/>
            <person name="Sugiura K."/>
            <person name="Sultana R."/>
            <person name="Takenaka Y."/>
            <person name="Taki K."/>
            <person name="Tammoja K."/>
            <person name="Tan S.L."/>
            <person name="Tang S."/>
            <person name="Taylor M.S."/>
            <person name="Tegner J."/>
            <person name="Teichmann S.A."/>
            <person name="Ueda H.R."/>
            <person name="van Nimwegen E."/>
            <person name="Verardo R."/>
            <person name="Wei C.L."/>
            <person name="Yagi K."/>
            <person name="Yamanishi H."/>
            <person name="Zabarovsky E."/>
            <person name="Zhu S."/>
            <person name="Zimmer A."/>
            <person name="Hide W."/>
            <person name="Bult C."/>
            <person name="Grimmond S.M."/>
            <person name="Teasdale R.D."/>
            <person name="Liu E.T."/>
            <person name="Brusic V."/>
            <person name="Quackenbush J."/>
            <person name="Wahlestedt C."/>
            <person name="Mattick J.S."/>
            <person name="Hume D.A."/>
            <person name="Kai C."/>
            <person name="Sasaki D."/>
            <person name="Tomaru Y."/>
            <person name="Fukuda S."/>
            <person name="Kanamori-Katayama M."/>
            <person name="Suzuki M."/>
            <person name="Aoki J."/>
            <person name="Arakawa T."/>
            <person name="Iida J."/>
            <person name="Imamura K."/>
            <person name="Itoh M."/>
            <person name="Kato T."/>
            <person name="Kawaji H."/>
            <person name="Kawagashira N."/>
            <person name="Kawashima T."/>
            <person name="Kojima M."/>
            <person name="Kondo S."/>
            <person name="Konno H."/>
            <person name="Nakano K."/>
            <person name="Ninomiya N."/>
            <person name="Nishio T."/>
            <person name="Okada M."/>
            <person name="Plessy C."/>
            <person name="Shibata K."/>
            <person name="Shiraki T."/>
            <person name="Suzuki S."/>
            <person name="Tagami M."/>
            <person name="Waki K."/>
            <person name="Watahiki A."/>
            <person name="Okamura-Oho Y."/>
            <person name="Suzuki H."/>
            <person name="Kawai J."/>
            <person name="Hayashizaki Y."/>
        </authorList>
    </citation>
    <scope>NUCLEOTIDE SEQUENCE [LARGE SCALE MRNA]</scope>
    <source>
        <strain>C57BL/6J</strain>
        <tissue>Olfactory bulb</tissue>
        <tissue>Skin</tissue>
    </source>
</reference>
<reference key="3">
    <citation type="submission" date="2007-04" db="UniProtKB">
        <authorList>
            <person name="Lubec G."/>
            <person name="Kang S.U."/>
        </authorList>
    </citation>
    <scope>PROTEIN SEQUENCE OF 8-24 AND 42-72</scope>
    <scope>IDENTIFICATION BY MASS SPECTROMETRY</scope>
    <source>
        <strain>C57BL/6J</strain>
        <tissue>Brain</tissue>
    </source>
</reference>
<reference key="4">
    <citation type="journal article" date="2007" name="Biochim. Biophys. Acta">
        <title>Cysteine-string protein isoform beta (Cspbeta) is targeted to the trans-Golgi network as a non-palmitoylated CSP in clonal beta-cells.</title>
        <authorList>
            <person name="Boal F."/>
            <person name="Le Pevelen S."/>
            <person name="Cziepluch C."/>
            <person name="Scotti P."/>
            <person name="Lang J."/>
        </authorList>
    </citation>
    <scope>INTERACTION WITH HSC70 AND SGTA</scope>
    <scope>SUBCELLULAR LOCATION</scope>
    <scope>PALMITOYLATION</scope>
    <scope>MUTAGENESIS OF CYS-113; CYS-118; CYS-121; PHE-129 AND LYS-135</scope>
</reference>
<reference key="5">
    <citation type="journal article" date="2007" name="Mol. Cell. Proteomics">
        <title>Mitochondrial phosphoproteome revealed by an improved IMAC method and MS/MS/MS.</title>
        <authorList>
            <person name="Lee J."/>
            <person name="Xu Y."/>
            <person name="Chen Y."/>
            <person name="Sprung R."/>
            <person name="Kim S.C."/>
            <person name="Xie S."/>
            <person name="Zhao Y."/>
        </authorList>
    </citation>
    <scope>IDENTIFICATION BY MASS SPECTROMETRY [LARGE SCALE ANALYSIS]</scope>
    <source>
        <tissue>Liver</tissue>
    </source>
</reference>
<reference key="6">
    <citation type="journal article" date="2007" name="Proc. Natl. Acad. Sci. U.S.A.">
        <title>Large-scale phosphorylation analysis of mouse liver.</title>
        <authorList>
            <person name="Villen J."/>
            <person name="Beausoleil S.A."/>
            <person name="Gerber S.A."/>
            <person name="Gygi S.P."/>
        </authorList>
    </citation>
    <scope>IDENTIFICATION BY MASS SPECTROMETRY [LARGE SCALE ANALYSIS]</scope>
    <source>
        <tissue>Liver</tissue>
    </source>
</reference>
<reference key="7">
    <citation type="journal article" date="2008" name="J. Proteome Res.">
        <title>Specific phosphopeptide enrichment with immobilized titanium ion affinity chromatography adsorbent for phosphoproteome analysis.</title>
        <authorList>
            <person name="Zhou H."/>
            <person name="Ye M."/>
            <person name="Dong J."/>
            <person name="Han G."/>
            <person name="Jiang X."/>
            <person name="Wu R."/>
            <person name="Zou H."/>
        </authorList>
    </citation>
    <scope>IDENTIFICATION BY MASS SPECTROMETRY [LARGE SCALE ANALYSIS]</scope>
    <source>
        <tissue>Liver</tissue>
    </source>
</reference>
<reference key="8">
    <citation type="journal article" date="2009" name="Immunity">
        <title>The phagosomal proteome in interferon-gamma-activated macrophages.</title>
        <authorList>
            <person name="Trost M."/>
            <person name="English L."/>
            <person name="Lemieux S."/>
            <person name="Courcelles M."/>
            <person name="Desjardins M."/>
            <person name="Thibault P."/>
        </authorList>
    </citation>
    <scope>IDENTIFICATION BY MASS SPECTROMETRY [LARGE SCALE ANALYSIS]</scope>
</reference>
<reference key="9">
    <citation type="journal article" date="2009" name="Mol. Cell. Proteomics">
        <title>Large scale localization of protein phosphorylation by use of electron capture dissociation mass spectrometry.</title>
        <authorList>
            <person name="Sweet S.M."/>
            <person name="Bailey C.M."/>
            <person name="Cunningham D.L."/>
            <person name="Heath J.K."/>
            <person name="Cooper H.J."/>
        </authorList>
    </citation>
    <scope>PHOSPHORYLATION [LARGE SCALE ANALYSIS] AT SER-10</scope>
    <scope>IDENTIFICATION BY MASS SPECTROMETRY [LARGE SCALE ANALYSIS]</scope>
    <source>
        <tissue>Embryonic fibroblast</tissue>
    </source>
</reference>
<reference key="10">
    <citation type="journal article" date="2010" name="Cell">
        <title>A tissue-specific atlas of mouse protein phosphorylation and expression.</title>
        <authorList>
            <person name="Huttlin E.L."/>
            <person name="Jedrychowski M.P."/>
            <person name="Elias J.E."/>
            <person name="Goswami T."/>
            <person name="Rad R."/>
            <person name="Beausoleil S.A."/>
            <person name="Villen J."/>
            <person name="Haas W."/>
            <person name="Sowa M.E."/>
            <person name="Gygi S.P."/>
        </authorList>
    </citation>
    <scope>PHOSPHORYLATION [LARGE SCALE ANALYSIS] AT SER-15 AND SER-151</scope>
    <scope>IDENTIFICATION BY MASS SPECTROMETRY [LARGE SCALE ANALYSIS]</scope>
    <source>
        <tissue>Brain</tissue>
        <tissue>Brown adipose tissue</tissue>
        <tissue>Heart</tissue>
        <tissue>Kidney</tissue>
        <tissue>Liver</tissue>
        <tissue>Lung</tissue>
        <tissue>Pancreas</tissue>
        <tissue>Spleen</tissue>
        <tissue>Testis</tissue>
    </source>
</reference>
<reference key="11">
    <citation type="journal article" date="2011" name="FASEB J.">
        <title>A charged prominence in the linker domain of the cysteine-string protein Cspalpha mediates its regulated interaction with the calcium sensor synaptotagmin 9 during exocytosis.</title>
        <authorList>
            <person name="Boal F."/>
            <person name="Laguerre M."/>
            <person name="Milochau A."/>
            <person name="Lang J."/>
            <person name="Scotti P.A."/>
        </authorList>
    </citation>
    <scope>FUNCTION</scope>
    <scope>INTERACTION WITH SYT1; SYT5; SYT7; SYT9 AND HSC70</scope>
    <scope>MUTAGENESIS OF SER-10 AND GLU-93</scope>
    <scope>PHOSPHORYLATION AT SER-10</scope>
</reference>
<reference key="12">
    <citation type="journal article" date="2012" name="EMBO J.">
        <title>CSPalpha knockout causes neurodegeneration by impairing SNAP-25 function.</title>
        <authorList>
            <person name="Sharma M."/>
            <person name="Burre J."/>
            <person name="Bronk P."/>
            <person name="Zhang Y."/>
            <person name="Xu W."/>
            <person name="Suedhof T.C."/>
        </authorList>
    </citation>
    <scope>FUNCTION</scope>
    <scope>DISRUPTION PHENOTYPE</scope>
</reference>
<reference key="13">
    <citation type="journal article" date="2014" name="Mol. Biol. Cell">
        <title>The Golgi S-acylation machinery comprises zDHHC enzymes with major differences in substrate affinity and S-acylation activity.</title>
        <authorList>
            <person name="Lemonidis K."/>
            <person name="Gorleku O.A."/>
            <person name="Sanchez-Perez M.C."/>
            <person name="Grefen C."/>
            <person name="Chamberlain L.H."/>
        </authorList>
    </citation>
    <scope>INTERACTION WITH ZDHHC13 AND ZDHHC17</scope>
</reference>
<reference key="14">
    <citation type="journal article" date="2015" name="J. Biol. Chem.">
        <title>Identification of a novel sequence motif recognized by the ankyrin repeat domain of zDHHC17/13 S-acyltransferases.</title>
        <authorList>
            <person name="Lemonidis K."/>
            <person name="Sanchez-Perez M.C."/>
            <person name="Chamberlain L.H."/>
        </authorList>
    </citation>
    <scope>INTERACTION WITH ZDHHC17 AND ZDHHC13</scope>
</reference>
<reference key="15">
    <citation type="journal article" date="2015" name="Semin. Cell Dev. Biol.">
        <title>Cysteine string protein (CSP) and its role in preventing neurodegeneration.</title>
        <authorList>
            <person name="Burgoyne R.D."/>
            <person name="Morgan A."/>
        </authorList>
    </citation>
    <scope>REVIEW</scope>
</reference>
<reference key="16">
    <citation type="submission" date="2005-11" db="PDB data bank">
        <title>Solution structure of J-domain from mouse DnaJ subfamily C member 5.</title>
        <authorList>
            <consortium name="RIKEN structural genomics initiative (RSGI)"/>
        </authorList>
    </citation>
    <scope>STRUCTURE BY NMR OF 5-100</scope>
</reference>
<proteinExistence type="evidence at protein level"/>
<evidence type="ECO:0000250" key="1">
    <source>
        <dbReference type="UniProtKB" id="Q29455"/>
    </source>
</evidence>
<evidence type="ECO:0000250" key="2">
    <source>
        <dbReference type="UniProtKB" id="Q9H3Z4"/>
    </source>
</evidence>
<evidence type="ECO:0000255" key="3">
    <source>
        <dbReference type="PROSITE-ProRule" id="PRU00286"/>
    </source>
</evidence>
<evidence type="ECO:0000269" key="4">
    <source>
    </source>
</evidence>
<evidence type="ECO:0000269" key="5">
    <source>
    </source>
</evidence>
<evidence type="ECO:0000269" key="6">
    <source>
    </source>
</evidence>
<evidence type="ECO:0000269" key="7">
    <source>
    </source>
</evidence>
<evidence type="ECO:0000269" key="8">
    <source>
    </source>
</evidence>
<evidence type="ECO:0000303" key="9">
    <source>
    </source>
</evidence>
<evidence type="ECO:0000305" key="10"/>
<evidence type="ECO:0000312" key="11">
    <source>
        <dbReference type="MGI" id="MGI:892995"/>
    </source>
</evidence>
<evidence type="ECO:0007744" key="12">
    <source>
    </source>
</evidence>
<evidence type="ECO:0007744" key="13">
    <source>
    </source>
</evidence>
<evidence type="ECO:0007829" key="14">
    <source>
        <dbReference type="PDB" id="2CTW"/>
    </source>
</evidence>
<gene>
    <name evidence="11" type="primary">Dnajc5</name>
    <name evidence="9" type="synonym">Cspalpha</name>
</gene>
<name>DNJC5_MOUSE</name>
<accession>P60904</accession>
<accession>P54101</accession>
<protein>
    <recommendedName>
        <fullName evidence="10">DnaJ homolog subfamily C member 5</fullName>
    </recommendedName>
    <alternativeName>
        <fullName evidence="2">Cysteine string protein</fullName>
        <shortName evidence="2">CSP</shortName>
    </alternativeName>
    <alternativeName>
        <fullName evidence="9">Cysteine-string protein isoform alpha</fullName>
    </alternativeName>
</protein>
<comment type="function">
    <text evidence="1 5 6">Acts as a co-chaperone for the SNARE protein SNAP-25 (PubMed:22187053). Involved in the calcium-mediated control of a late stage of exocytosis (PubMed:20847230). Acts as a general chaperone in regulated exocytosis (By similarity). May have an important role in presynaptic function (By similarity). May be involved in calcium-dependent neurotransmitter release at nerve endings (By similarity).</text>
</comment>
<comment type="subunit">
    <text evidence="4 5 7 8 10">Homodimer (Probable). Interacts with the chaperone complex consisting of HSC70 and SGTA (PubMed:17034881, PubMed:20847230). Interacts with ZDHHC13 (via ANK repeats) (PubMed:25253725, PubMed:26198635). Interacts with ZDHHC17 (via ANK repeats) (PubMed:25253725, PubMed:26198635). Interacts with SYT1, SYT5 and SYT7, and with SYT9, forming a complex with SNAP25 (PubMed:20847230). The interaction with SYT9 is stimulated tenfold in presence of calcium (PubMed:20847230).</text>
</comment>
<comment type="subcellular location">
    <subcellularLocation>
        <location evidence="1">Cytoplasm</location>
        <location evidence="1">Cytosol</location>
    </subcellularLocation>
    <subcellularLocation>
        <location evidence="4">Membrane</location>
        <topology evidence="4">Lipid-anchor</topology>
    </subcellularLocation>
    <subcellularLocation>
        <location evidence="1">Cytoplasmic vesicle</location>
        <location evidence="1">Secretory vesicle</location>
        <location evidence="1">Chromaffin granule membrane</location>
    </subcellularLocation>
    <subcellularLocation>
        <location evidence="2">Melanosome</location>
    </subcellularLocation>
    <subcellularLocation>
        <location evidence="2">Cell membrane</location>
    </subcellularLocation>
    <text evidence="1 4">The association with membranes is regulated by palmitoylation (By similarity). Colocalizes with insulin granules, when overexpressed in an islet cell line (PubMed:17034881).</text>
</comment>
<comment type="PTM">
    <text evidence="2 5">Formation of the chaperone complex DNAJC5/HSC70 is not regulated by phosphorylation (PubMed:20847230). Ser-10 phosphorylation induces an order-to-disorder transition triggering the interaction with Lys-58 (By similarity). This conformational switch modulates DNAJC5's cellular functions by reducing binding to syntaxin and synaptogamin without altering HSC70 interactions (By similarity).</text>
</comment>
<comment type="PTM">
    <text evidence="1 4">Palmitoylated (PubMed:17034881). Could be palmitoylated by DHHC3, DHHC7, DHHC15 and DHHC17 (By similarity). Palmitoylation occurs probably in the cysteine-rich domain and regulates DNAJC5 membrane attachment (PubMed:17034881).</text>
</comment>
<comment type="disruption phenotype">
    <text evidence="6">Defective SNAP-25 function, which causes neurodegeneration by impairing SNARE-complex assembly (PubMed:22187053).</text>
</comment>
<keyword id="KW-0002">3D-structure</keyword>
<keyword id="KW-0007">Acetylation</keyword>
<keyword id="KW-1003">Cell membrane</keyword>
<keyword id="KW-0143">Chaperone</keyword>
<keyword id="KW-0963">Cytoplasm</keyword>
<keyword id="KW-0968">Cytoplasmic vesicle</keyword>
<keyword id="KW-0903">Direct protein sequencing</keyword>
<keyword id="KW-0449">Lipoprotein</keyword>
<keyword id="KW-0472">Membrane</keyword>
<keyword id="KW-0564">Palmitate</keyword>
<keyword id="KW-0597">Phosphoprotein</keyword>
<keyword id="KW-1185">Reference proteome</keyword>
<sequence length="198" mass="22101">MADQRQRSLSTSGESLYHVLGLDKNATSDDIKKSYRKLALKYHPDKNPDNPEAADKFKEINNAHAILTDATKRNIYDKYGSLGLYVAEQFGEENVNTYFVLSSWWAKALFVVCGLLTCCYCCCCLCCCFNCCCGKCKPKAPEGEETEFYVSPEDLEAQLQSDEREATDTPIVIQPASATETTQLTADSHPSYHTDGFN</sequence>
<dbReference type="EMBL" id="AF032115">
    <property type="protein sequence ID" value="AAB87080.1"/>
    <property type="molecule type" value="mRNA"/>
</dbReference>
<dbReference type="EMBL" id="AK029006">
    <property type="protein sequence ID" value="BAC26236.1"/>
    <property type="molecule type" value="mRNA"/>
</dbReference>
<dbReference type="EMBL" id="AK032373">
    <property type="protein sequence ID" value="BAC27841.1"/>
    <property type="molecule type" value="mRNA"/>
</dbReference>
<dbReference type="CCDS" id="CCDS17215.1"/>
<dbReference type="RefSeq" id="NP_001258513.1">
    <property type="nucleotide sequence ID" value="NM_001271584.1"/>
</dbReference>
<dbReference type="RefSeq" id="NP_001258514.1">
    <property type="nucleotide sequence ID" value="NM_001271585.1"/>
</dbReference>
<dbReference type="RefSeq" id="NP_058055.1">
    <property type="nucleotide sequence ID" value="NM_016775.3"/>
</dbReference>
<dbReference type="RefSeq" id="XP_011238225.1">
    <property type="nucleotide sequence ID" value="XM_011239923.4"/>
</dbReference>
<dbReference type="RefSeq" id="XP_036013878.1">
    <property type="nucleotide sequence ID" value="XM_036157985.1"/>
</dbReference>
<dbReference type="PDB" id="2CTW">
    <property type="method" value="NMR"/>
    <property type="chains" value="A=5-100"/>
</dbReference>
<dbReference type="PDBsum" id="2CTW"/>
<dbReference type="SMR" id="P60904"/>
<dbReference type="BioGRID" id="198948">
    <property type="interactions" value="8"/>
</dbReference>
<dbReference type="CORUM" id="P60904"/>
<dbReference type="FunCoup" id="P60904">
    <property type="interactions" value="2533"/>
</dbReference>
<dbReference type="IntAct" id="P60904">
    <property type="interactions" value="7"/>
</dbReference>
<dbReference type="MINT" id="P60904"/>
<dbReference type="STRING" id="10090.ENSMUSP00000072175"/>
<dbReference type="TCDB" id="8.A.192.1.1">
    <property type="family name" value="the dnaj homolog (dnaj) family"/>
</dbReference>
<dbReference type="iPTMnet" id="P60904"/>
<dbReference type="PhosphoSitePlus" id="P60904"/>
<dbReference type="SwissPalm" id="P60904"/>
<dbReference type="jPOST" id="P60904"/>
<dbReference type="PaxDb" id="10090-ENSMUSP00000072175"/>
<dbReference type="PeptideAtlas" id="P60904"/>
<dbReference type="ProteomicsDB" id="277354"/>
<dbReference type="Pumba" id="P60904"/>
<dbReference type="Antibodypedia" id="2284">
    <property type="antibodies" value="253 antibodies from 32 providers"/>
</dbReference>
<dbReference type="DNASU" id="13002"/>
<dbReference type="Ensembl" id="ENSMUST00000072334.12">
    <property type="protein sequence ID" value="ENSMUSP00000072175.6"/>
    <property type="gene ID" value="ENSMUSG00000000826.17"/>
</dbReference>
<dbReference type="Ensembl" id="ENSMUST00000108796.2">
    <property type="protein sequence ID" value="ENSMUSP00000104424.2"/>
    <property type="gene ID" value="ENSMUSG00000000826.17"/>
</dbReference>
<dbReference type="Ensembl" id="ENSMUST00000108797.8">
    <property type="protein sequence ID" value="ENSMUSP00000104425.2"/>
    <property type="gene ID" value="ENSMUSG00000000826.17"/>
</dbReference>
<dbReference type="GeneID" id="13002"/>
<dbReference type="KEGG" id="mmu:13002"/>
<dbReference type="UCSC" id="uc008omp.2">
    <property type="organism name" value="mouse"/>
</dbReference>
<dbReference type="AGR" id="MGI:892995"/>
<dbReference type="CTD" id="80331"/>
<dbReference type="MGI" id="MGI:892995">
    <property type="gene designation" value="Dnajc5"/>
</dbReference>
<dbReference type="VEuPathDB" id="HostDB:ENSMUSG00000000826"/>
<dbReference type="eggNOG" id="KOG0716">
    <property type="taxonomic scope" value="Eukaryota"/>
</dbReference>
<dbReference type="GeneTree" id="ENSGT00940000155597"/>
<dbReference type="InParanoid" id="P60904"/>
<dbReference type="OMA" id="CCLCCNF"/>
<dbReference type="OrthoDB" id="445556at2759"/>
<dbReference type="PhylomeDB" id="P60904"/>
<dbReference type="TreeFam" id="TF105164"/>
<dbReference type="Reactome" id="R-MMU-6798695">
    <property type="pathway name" value="Neutrophil degranulation"/>
</dbReference>
<dbReference type="Reactome" id="R-MMU-888590">
    <property type="pathway name" value="GABA synthesis, release, reuptake and degradation"/>
</dbReference>
<dbReference type="BioGRID-ORCS" id="13002">
    <property type="hits" value="2 hits in 79 CRISPR screens"/>
</dbReference>
<dbReference type="ChiTaRS" id="Dnajc5">
    <property type="organism name" value="mouse"/>
</dbReference>
<dbReference type="EvolutionaryTrace" id="P60904"/>
<dbReference type="PRO" id="PR:P60904"/>
<dbReference type="Proteomes" id="UP000000589">
    <property type="component" value="Chromosome 2"/>
</dbReference>
<dbReference type="RNAct" id="P60904">
    <property type="molecule type" value="protein"/>
</dbReference>
<dbReference type="Bgee" id="ENSMUSG00000000826">
    <property type="expression patterns" value="Expressed in barrel cortex and 257 other cell types or tissues"/>
</dbReference>
<dbReference type="ExpressionAtlas" id="P60904">
    <property type="expression patterns" value="baseline and differential"/>
</dbReference>
<dbReference type="GO" id="GO:0042584">
    <property type="term" value="C:chromaffin granule membrane"/>
    <property type="evidence" value="ECO:0007669"/>
    <property type="project" value="UniProtKB-SubCell"/>
</dbReference>
<dbReference type="GO" id="GO:0060203">
    <property type="term" value="C:clathrin-sculpted glutamate transport vesicle membrane"/>
    <property type="evidence" value="ECO:0000304"/>
    <property type="project" value="Reactome"/>
</dbReference>
<dbReference type="GO" id="GO:0005829">
    <property type="term" value="C:cytosol"/>
    <property type="evidence" value="ECO:0000250"/>
    <property type="project" value="UniProtKB"/>
</dbReference>
<dbReference type="GO" id="GO:0042470">
    <property type="term" value="C:melanosome"/>
    <property type="evidence" value="ECO:0007669"/>
    <property type="project" value="UniProtKB-SubCell"/>
</dbReference>
<dbReference type="GO" id="GO:0016020">
    <property type="term" value="C:membrane"/>
    <property type="evidence" value="ECO:0000250"/>
    <property type="project" value="UniProtKB"/>
</dbReference>
<dbReference type="GO" id="GO:0031594">
    <property type="term" value="C:neuromuscular junction"/>
    <property type="evidence" value="ECO:0000314"/>
    <property type="project" value="SynGO"/>
</dbReference>
<dbReference type="GO" id="GO:0005886">
    <property type="term" value="C:plasma membrane"/>
    <property type="evidence" value="ECO:0000250"/>
    <property type="project" value="UniProtKB"/>
</dbReference>
<dbReference type="GO" id="GO:0098793">
    <property type="term" value="C:presynapse"/>
    <property type="evidence" value="ECO:0000314"/>
    <property type="project" value="SynGO"/>
</dbReference>
<dbReference type="GO" id="GO:0008021">
    <property type="term" value="C:synaptic vesicle"/>
    <property type="evidence" value="ECO:0000314"/>
    <property type="project" value="MGI"/>
</dbReference>
<dbReference type="GO" id="GO:0030672">
    <property type="term" value="C:synaptic vesicle membrane"/>
    <property type="evidence" value="ECO:0007669"/>
    <property type="project" value="Ensembl"/>
</dbReference>
<dbReference type="GO" id="GO:0043008">
    <property type="term" value="F:ATP-dependent protein binding"/>
    <property type="evidence" value="ECO:0007669"/>
    <property type="project" value="Ensembl"/>
</dbReference>
<dbReference type="GO" id="GO:0061077">
    <property type="term" value="P:chaperone-mediated protein folding"/>
    <property type="evidence" value="ECO:0000314"/>
    <property type="project" value="SynGO"/>
</dbReference>
<dbReference type="GO" id="GO:0043524">
    <property type="term" value="P:negative regulation of neuron apoptotic process"/>
    <property type="evidence" value="ECO:0000316"/>
    <property type="project" value="MGI"/>
</dbReference>
<dbReference type="GO" id="GO:0051402">
    <property type="term" value="P:neuron apoptotic process"/>
    <property type="evidence" value="ECO:0000316"/>
    <property type="project" value="MGI"/>
</dbReference>
<dbReference type="GO" id="GO:0098693">
    <property type="term" value="P:regulation of synaptic vesicle cycle"/>
    <property type="evidence" value="ECO:0000314"/>
    <property type="project" value="SynGO"/>
</dbReference>
<dbReference type="CDD" id="cd06257">
    <property type="entry name" value="DnaJ"/>
    <property type="match status" value="1"/>
</dbReference>
<dbReference type="FunFam" id="1.10.287.110:FF:000017">
    <property type="entry name" value="dnaJ homolog subfamily C member 5"/>
    <property type="match status" value="1"/>
</dbReference>
<dbReference type="Gene3D" id="1.10.287.110">
    <property type="entry name" value="DnaJ domain"/>
    <property type="match status" value="1"/>
</dbReference>
<dbReference type="InterPro" id="IPR051434">
    <property type="entry name" value="DnaJ_C_subfamily_member5"/>
</dbReference>
<dbReference type="InterPro" id="IPR001623">
    <property type="entry name" value="DnaJ_domain"/>
</dbReference>
<dbReference type="InterPro" id="IPR018253">
    <property type="entry name" value="DnaJ_domain_CS"/>
</dbReference>
<dbReference type="InterPro" id="IPR036869">
    <property type="entry name" value="J_dom_sf"/>
</dbReference>
<dbReference type="PANTHER" id="PTHR44027:SF1">
    <property type="entry name" value="DNAJ HOMOLOG SUBFAMILY C MEMBER 5"/>
    <property type="match status" value="1"/>
</dbReference>
<dbReference type="PANTHER" id="PTHR44027">
    <property type="entry name" value="DNAJ HOMOLOG SUBFAMILY C MEMBER 5 HOMOLOG"/>
    <property type="match status" value="1"/>
</dbReference>
<dbReference type="Pfam" id="PF00226">
    <property type="entry name" value="DnaJ"/>
    <property type="match status" value="1"/>
</dbReference>
<dbReference type="PRINTS" id="PR00625">
    <property type="entry name" value="JDOMAIN"/>
</dbReference>
<dbReference type="SMART" id="SM00271">
    <property type="entry name" value="DnaJ"/>
    <property type="match status" value="1"/>
</dbReference>
<dbReference type="SUPFAM" id="SSF46565">
    <property type="entry name" value="Chaperone J-domain"/>
    <property type="match status" value="1"/>
</dbReference>
<dbReference type="PROSITE" id="PS00636">
    <property type="entry name" value="DNAJ_1"/>
    <property type="match status" value="1"/>
</dbReference>
<dbReference type="PROSITE" id="PS50076">
    <property type="entry name" value="DNAJ_2"/>
    <property type="match status" value="1"/>
</dbReference>
<feature type="chain" id="PRO_0000071053" description="DnaJ homolog subfamily C member 5">
    <location>
        <begin position="1"/>
        <end position="198"/>
    </location>
</feature>
<feature type="domain" description="J" evidence="3">
    <location>
        <begin position="13"/>
        <end position="82"/>
    </location>
</feature>
<feature type="modified residue" description="Phosphoserine" evidence="2">
    <location>
        <position position="8"/>
    </location>
</feature>
<feature type="modified residue" description="Phosphoserine" evidence="12">
    <location>
        <position position="10"/>
    </location>
</feature>
<feature type="modified residue" description="Phosphoserine" evidence="2">
    <location>
        <position position="12"/>
    </location>
</feature>
<feature type="modified residue" description="Phosphoserine" evidence="13">
    <location>
        <position position="15"/>
    </location>
</feature>
<feature type="modified residue" description="Phosphotyrosine" evidence="2">
    <location>
        <position position="17"/>
    </location>
</feature>
<feature type="modified residue" description="N6-acetyllysine" evidence="2">
    <location>
        <position position="56"/>
    </location>
</feature>
<feature type="modified residue" description="Phosphoserine" evidence="13">
    <location>
        <position position="151"/>
    </location>
</feature>
<feature type="mutagenesis site" description="Reduced interaction with SYT9, but no effect on the interaction with HSC70." evidence="5">
    <original>S</original>
    <variation>D</variation>
    <location>
        <position position="10"/>
    </location>
</feature>
<feature type="mutagenesis site" description="Reduced interaction with SYT9." evidence="5">
    <original>E</original>
    <variation>V</variation>
    <location>
        <position position="93"/>
    </location>
</feature>
<feature type="mutagenesis site" description="No effect on palmitoylation. No change in subcellular location; when associated with G-118 and F-121." evidence="4">
    <original>C</original>
    <variation>V</variation>
    <location>
        <position position="113"/>
    </location>
</feature>
<feature type="mutagenesis site" description="No effect on palmitoylation. No change in subcellular location; when associated with V-113 and F-121." evidence="4">
    <original>C</original>
    <variation>G</variation>
    <location>
        <position position="118"/>
    </location>
</feature>
<feature type="mutagenesis site" description="No effect on palmitoylation. No change in subcellular location; when associated with V-113 and G-118." evidence="4">
    <original>C</original>
    <variation>F</variation>
    <location>
        <position position="121"/>
    </location>
</feature>
<feature type="mutagenesis site" description="No effect on palmitoylation. No change in subcellular location; when associated with H-135." evidence="4">
    <original>F</original>
    <variation>C</variation>
    <location>
        <position position="129"/>
    </location>
</feature>
<feature type="mutagenesis site" description="No effect on palmitoylation. No change in subcellular location; when associated with C-129." evidence="4">
    <original>K</original>
    <variation>H</variation>
    <location>
        <position position="135"/>
    </location>
</feature>
<feature type="helix" evidence="14">
    <location>
        <begin position="16"/>
        <end position="20"/>
    </location>
</feature>
<feature type="helix" evidence="14">
    <location>
        <begin position="28"/>
        <end position="41"/>
    </location>
</feature>
<feature type="turn" evidence="14">
    <location>
        <begin position="44"/>
        <end position="46"/>
    </location>
</feature>
<feature type="helix" evidence="14">
    <location>
        <begin position="51"/>
        <end position="67"/>
    </location>
</feature>
<feature type="helix" evidence="14">
    <location>
        <begin position="70"/>
        <end position="78"/>
    </location>
</feature>
<feature type="helix" evidence="14">
    <location>
        <begin position="81"/>
        <end position="89"/>
    </location>
</feature>
<feature type="helix" evidence="14">
    <location>
        <begin position="94"/>
        <end position="100"/>
    </location>
</feature>
<organism>
    <name type="scientific">Mus musculus</name>
    <name type="common">Mouse</name>
    <dbReference type="NCBI Taxonomy" id="10090"/>
    <lineage>
        <taxon>Eukaryota</taxon>
        <taxon>Metazoa</taxon>
        <taxon>Chordata</taxon>
        <taxon>Craniata</taxon>
        <taxon>Vertebrata</taxon>
        <taxon>Euteleostomi</taxon>
        <taxon>Mammalia</taxon>
        <taxon>Eutheria</taxon>
        <taxon>Euarchontoglires</taxon>
        <taxon>Glires</taxon>
        <taxon>Rodentia</taxon>
        <taxon>Myomorpha</taxon>
        <taxon>Muroidea</taxon>
        <taxon>Muridae</taxon>
        <taxon>Murinae</taxon>
        <taxon>Mus</taxon>
        <taxon>Mus</taxon>
    </lineage>
</organism>